<reference key="1">
    <citation type="journal article" date="2005" name="Nature">
        <title>Generation and annotation of the DNA sequences of human chromosomes 2 and 4.</title>
        <authorList>
            <person name="Hillier L.W."/>
            <person name="Graves T.A."/>
            <person name="Fulton R.S."/>
            <person name="Fulton L.A."/>
            <person name="Pepin K.H."/>
            <person name="Minx P."/>
            <person name="Wagner-McPherson C."/>
            <person name="Layman D."/>
            <person name="Wylie K."/>
            <person name="Sekhon M."/>
            <person name="Becker M.C."/>
            <person name="Fewell G.A."/>
            <person name="Delehaunty K.D."/>
            <person name="Miner T.L."/>
            <person name="Nash W.E."/>
            <person name="Kremitzki C."/>
            <person name="Oddy L."/>
            <person name="Du H."/>
            <person name="Sun H."/>
            <person name="Bradshaw-Cordum H."/>
            <person name="Ali J."/>
            <person name="Carter J."/>
            <person name="Cordes M."/>
            <person name="Harris A."/>
            <person name="Isak A."/>
            <person name="van Brunt A."/>
            <person name="Nguyen C."/>
            <person name="Du F."/>
            <person name="Courtney L."/>
            <person name="Kalicki J."/>
            <person name="Ozersky P."/>
            <person name="Abbott S."/>
            <person name="Armstrong J."/>
            <person name="Belter E.A."/>
            <person name="Caruso L."/>
            <person name="Cedroni M."/>
            <person name="Cotton M."/>
            <person name="Davidson T."/>
            <person name="Desai A."/>
            <person name="Elliott G."/>
            <person name="Erb T."/>
            <person name="Fronick C."/>
            <person name="Gaige T."/>
            <person name="Haakenson W."/>
            <person name="Haglund K."/>
            <person name="Holmes A."/>
            <person name="Harkins R."/>
            <person name="Kim K."/>
            <person name="Kruchowski S.S."/>
            <person name="Strong C.M."/>
            <person name="Grewal N."/>
            <person name="Goyea E."/>
            <person name="Hou S."/>
            <person name="Levy A."/>
            <person name="Martinka S."/>
            <person name="Mead K."/>
            <person name="McLellan M.D."/>
            <person name="Meyer R."/>
            <person name="Randall-Maher J."/>
            <person name="Tomlinson C."/>
            <person name="Dauphin-Kohlberg S."/>
            <person name="Kozlowicz-Reilly A."/>
            <person name="Shah N."/>
            <person name="Swearengen-Shahid S."/>
            <person name="Snider J."/>
            <person name="Strong J.T."/>
            <person name="Thompson J."/>
            <person name="Yoakum M."/>
            <person name="Leonard S."/>
            <person name="Pearman C."/>
            <person name="Trani L."/>
            <person name="Radionenko M."/>
            <person name="Waligorski J.E."/>
            <person name="Wang C."/>
            <person name="Rock S.M."/>
            <person name="Tin-Wollam A.-M."/>
            <person name="Maupin R."/>
            <person name="Latreille P."/>
            <person name="Wendl M.C."/>
            <person name="Yang S.-P."/>
            <person name="Pohl C."/>
            <person name="Wallis J.W."/>
            <person name="Spieth J."/>
            <person name="Bieri T.A."/>
            <person name="Berkowicz N."/>
            <person name="Nelson J.O."/>
            <person name="Osborne J."/>
            <person name="Ding L."/>
            <person name="Meyer R."/>
            <person name="Sabo A."/>
            <person name="Shotland Y."/>
            <person name="Sinha P."/>
            <person name="Wohldmann P.E."/>
            <person name="Cook L.L."/>
            <person name="Hickenbotham M.T."/>
            <person name="Eldred J."/>
            <person name="Williams D."/>
            <person name="Jones T.A."/>
            <person name="She X."/>
            <person name="Ciccarelli F.D."/>
            <person name="Izaurralde E."/>
            <person name="Taylor J."/>
            <person name="Schmutz J."/>
            <person name="Myers R.M."/>
            <person name="Cox D.R."/>
            <person name="Huang X."/>
            <person name="McPherson J.D."/>
            <person name="Mardis E.R."/>
            <person name="Clifton S.W."/>
            <person name="Warren W.C."/>
            <person name="Chinwalla A.T."/>
            <person name="Eddy S.R."/>
            <person name="Marra M.A."/>
            <person name="Ovcharenko I."/>
            <person name="Furey T.S."/>
            <person name="Miller W."/>
            <person name="Eichler E.E."/>
            <person name="Bork P."/>
            <person name="Suyama M."/>
            <person name="Torrents D."/>
            <person name="Waterston R.H."/>
            <person name="Wilson R.K."/>
        </authorList>
    </citation>
    <scope>NUCLEOTIDE SEQUENCE [LARGE SCALE GENOMIC DNA]</scope>
</reference>
<reference key="2">
    <citation type="journal article" date="2004" name="Nat. Genet.">
        <title>Complete sequencing and characterization of 21,243 full-length human cDNAs.</title>
        <authorList>
            <person name="Ota T."/>
            <person name="Suzuki Y."/>
            <person name="Nishikawa T."/>
            <person name="Otsuki T."/>
            <person name="Sugiyama T."/>
            <person name="Irie R."/>
            <person name="Wakamatsu A."/>
            <person name="Hayashi K."/>
            <person name="Sato H."/>
            <person name="Nagai K."/>
            <person name="Kimura K."/>
            <person name="Makita H."/>
            <person name="Sekine M."/>
            <person name="Obayashi M."/>
            <person name="Nishi T."/>
            <person name="Shibahara T."/>
            <person name="Tanaka T."/>
            <person name="Ishii S."/>
            <person name="Yamamoto J."/>
            <person name="Saito K."/>
            <person name="Kawai Y."/>
            <person name="Isono Y."/>
            <person name="Nakamura Y."/>
            <person name="Nagahari K."/>
            <person name="Murakami K."/>
            <person name="Yasuda T."/>
            <person name="Iwayanagi T."/>
            <person name="Wagatsuma M."/>
            <person name="Shiratori A."/>
            <person name="Sudo H."/>
            <person name="Hosoiri T."/>
            <person name="Kaku Y."/>
            <person name="Kodaira H."/>
            <person name="Kondo H."/>
            <person name="Sugawara M."/>
            <person name="Takahashi M."/>
            <person name="Kanda K."/>
            <person name="Yokoi T."/>
            <person name="Furuya T."/>
            <person name="Kikkawa E."/>
            <person name="Omura Y."/>
            <person name="Abe K."/>
            <person name="Kamihara K."/>
            <person name="Katsuta N."/>
            <person name="Sato K."/>
            <person name="Tanikawa M."/>
            <person name="Yamazaki M."/>
            <person name="Ninomiya K."/>
            <person name="Ishibashi T."/>
            <person name="Yamashita H."/>
            <person name="Murakawa K."/>
            <person name="Fujimori K."/>
            <person name="Tanai H."/>
            <person name="Kimata M."/>
            <person name="Watanabe M."/>
            <person name="Hiraoka S."/>
            <person name="Chiba Y."/>
            <person name="Ishida S."/>
            <person name="Ono Y."/>
            <person name="Takiguchi S."/>
            <person name="Watanabe S."/>
            <person name="Yosida M."/>
            <person name="Hotuta T."/>
            <person name="Kusano J."/>
            <person name="Kanehori K."/>
            <person name="Takahashi-Fujii A."/>
            <person name="Hara H."/>
            <person name="Tanase T.-O."/>
            <person name="Nomura Y."/>
            <person name="Togiya S."/>
            <person name="Komai F."/>
            <person name="Hara R."/>
            <person name="Takeuchi K."/>
            <person name="Arita M."/>
            <person name="Imose N."/>
            <person name="Musashino K."/>
            <person name="Yuuki H."/>
            <person name="Oshima A."/>
            <person name="Sasaki N."/>
            <person name="Aotsuka S."/>
            <person name="Yoshikawa Y."/>
            <person name="Matsunawa H."/>
            <person name="Ichihara T."/>
            <person name="Shiohata N."/>
            <person name="Sano S."/>
            <person name="Moriya S."/>
            <person name="Momiyama H."/>
            <person name="Satoh N."/>
            <person name="Takami S."/>
            <person name="Terashima Y."/>
            <person name="Suzuki O."/>
            <person name="Nakagawa S."/>
            <person name="Senoh A."/>
            <person name="Mizoguchi H."/>
            <person name="Goto Y."/>
            <person name="Shimizu F."/>
            <person name="Wakebe H."/>
            <person name="Hishigaki H."/>
            <person name="Watanabe T."/>
            <person name="Sugiyama A."/>
            <person name="Takemoto M."/>
            <person name="Kawakami B."/>
            <person name="Yamazaki M."/>
            <person name="Watanabe K."/>
            <person name="Kumagai A."/>
            <person name="Itakura S."/>
            <person name="Fukuzumi Y."/>
            <person name="Fujimori Y."/>
            <person name="Komiyama M."/>
            <person name="Tashiro H."/>
            <person name="Tanigami A."/>
            <person name="Fujiwara T."/>
            <person name="Ono T."/>
            <person name="Yamada K."/>
            <person name="Fujii Y."/>
            <person name="Ozaki K."/>
            <person name="Hirao M."/>
            <person name="Ohmori Y."/>
            <person name="Kawabata A."/>
            <person name="Hikiji T."/>
            <person name="Kobatake N."/>
            <person name="Inagaki H."/>
            <person name="Ikema Y."/>
            <person name="Okamoto S."/>
            <person name="Okitani R."/>
            <person name="Kawakami T."/>
            <person name="Noguchi S."/>
            <person name="Itoh T."/>
            <person name="Shigeta K."/>
            <person name="Senba T."/>
            <person name="Matsumura K."/>
            <person name="Nakajima Y."/>
            <person name="Mizuno T."/>
            <person name="Morinaga M."/>
            <person name="Sasaki M."/>
            <person name="Togashi T."/>
            <person name="Oyama M."/>
            <person name="Hata H."/>
            <person name="Watanabe M."/>
            <person name="Komatsu T."/>
            <person name="Mizushima-Sugano J."/>
            <person name="Satoh T."/>
            <person name="Shirai Y."/>
            <person name="Takahashi Y."/>
            <person name="Nakagawa K."/>
            <person name="Okumura K."/>
            <person name="Nagase T."/>
            <person name="Nomura N."/>
            <person name="Kikuchi H."/>
            <person name="Masuho Y."/>
            <person name="Yamashita R."/>
            <person name="Nakai K."/>
            <person name="Yada T."/>
            <person name="Nakamura Y."/>
            <person name="Ohara O."/>
            <person name="Isogai T."/>
            <person name="Sugano S."/>
        </authorList>
    </citation>
    <scope>NUCLEOTIDE SEQUENCE [LARGE SCALE MRNA] OF 1455-1958 (ISOFORM 2)</scope>
    <source>
        <tissue>Testis</tissue>
    </source>
</reference>
<keyword id="KW-0025">Alternative splicing</keyword>
<keyword id="KW-0963">Cytoplasm</keyword>
<keyword id="KW-0206">Cytoskeleton</keyword>
<keyword id="KW-0493">Microtubule</keyword>
<keyword id="KW-1267">Proteomics identification</keyword>
<keyword id="KW-1185">Reference proteome</keyword>
<keyword id="KW-0677">Repeat</keyword>
<keyword id="KW-0853">WD repeat</keyword>
<accession>Q6ZMW3</accession>
<accession>A8MUB5</accession>
<accession>B6ZDG7</accession>
<proteinExistence type="evidence at protein level"/>
<name>EMAL6_HUMAN</name>
<dbReference type="EMBL" id="AC013414">
    <property type="status" value="NOT_ANNOTATED_CDS"/>
    <property type="molecule type" value="Genomic_DNA"/>
</dbReference>
<dbReference type="EMBL" id="AC093110">
    <property type="status" value="NOT_ANNOTATED_CDS"/>
    <property type="molecule type" value="Genomic_DNA"/>
</dbReference>
<dbReference type="EMBL" id="AC104781">
    <property type="status" value="NOT_ANNOTATED_CDS"/>
    <property type="molecule type" value="Genomic_DNA"/>
</dbReference>
<dbReference type="EMBL" id="AK131467">
    <property type="protein sequence ID" value="BAD18612.1"/>
    <property type="molecule type" value="mRNA"/>
</dbReference>
<dbReference type="CCDS" id="CCDS46286.1">
    <molecule id="Q6ZMW3-1"/>
</dbReference>
<dbReference type="RefSeq" id="NP_001034842.2">
    <molecule id="Q6ZMW3-1"/>
    <property type="nucleotide sequence ID" value="NM_001039753.4"/>
</dbReference>
<dbReference type="SMR" id="Q6ZMW3"/>
<dbReference type="BioGRID" id="134838">
    <property type="interactions" value="10"/>
</dbReference>
<dbReference type="FunCoup" id="Q6ZMW3">
    <property type="interactions" value="197"/>
</dbReference>
<dbReference type="IntAct" id="Q6ZMW3">
    <property type="interactions" value="5"/>
</dbReference>
<dbReference type="STRING" id="9606.ENSP00000348842"/>
<dbReference type="GlyGen" id="Q6ZMW3">
    <property type="glycosylation" value="3 sites, 1 O-linked glycan (2 sites)"/>
</dbReference>
<dbReference type="iPTMnet" id="Q6ZMW3"/>
<dbReference type="PhosphoSitePlus" id="Q6ZMW3"/>
<dbReference type="BioMuta" id="EML6"/>
<dbReference type="DMDM" id="190358904"/>
<dbReference type="jPOST" id="Q6ZMW3"/>
<dbReference type="MassIVE" id="Q6ZMW3"/>
<dbReference type="PaxDb" id="9606-ENSP00000348842"/>
<dbReference type="PeptideAtlas" id="Q6ZMW3"/>
<dbReference type="ProteomicsDB" id="67929">
    <molecule id="Q6ZMW3-1"/>
</dbReference>
<dbReference type="ProteomicsDB" id="67930">
    <molecule id="Q6ZMW3-2"/>
</dbReference>
<dbReference type="Antibodypedia" id="74753">
    <property type="antibodies" value="8 antibodies from 4 providers"/>
</dbReference>
<dbReference type="Ensembl" id="ENST00000356458.8">
    <molecule id="Q6ZMW3-1"/>
    <property type="protein sequence ID" value="ENSP00000348842.6"/>
    <property type="gene ID" value="ENSG00000214595.13"/>
</dbReference>
<dbReference type="GeneID" id="400954"/>
<dbReference type="KEGG" id="hsa:400954"/>
<dbReference type="MANE-Select" id="ENST00000356458.8">
    <property type="protein sequence ID" value="ENSP00000348842.6"/>
    <property type="RefSeq nucleotide sequence ID" value="NM_001039753.4"/>
    <property type="RefSeq protein sequence ID" value="NP_001034842.2"/>
</dbReference>
<dbReference type="UCSC" id="uc002ryb.5">
    <molecule id="Q6ZMW3-1"/>
    <property type="organism name" value="human"/>
</dbReference>
<dbReference type="AGR" id="HGNC:35412"/>
<dbReference type="CTD" id="400954"/>
<dbReference type="DisGeNET" id="400954"/>
<dbReference type="GeneCards" id="EML6"/>
<dbReference type="HGNC" id="HGNC:35412">
    <property type="gene designation" value="EML6"/>
</dbReference>
<dbReference type="HPA" id="ENSG00000214595">
    <property type="expression patterns" value="Tissue enhanced (lymphoid tissue, retina)"/>
</dbReference>
<dbReference type="MIM" id="621084">
    <property type="type" value="gene"/>
</dbReference>
<dbReference type="neXtProt" id="NX_Q6ZMW3"/>
<dbReference type="OpenTargets" id="ENSG00000214595"/>
<dbReference type="PharmGKB" id="PA164719036"/>
<dbReference type="VEuPathDB" id="HostDB:ENSG00000214595"/>
<dbReference type="eggNOG" id="KOG2106">
    <property type="taxonomic scope" value="Eukaryota"/>
</dbReference>
<dbReference type="GeneTree" id="ENSGT00940000155564"/>
<dbReference type="HOGENOM" id="CLU_001930_0_0_1"/>
<dbReference type="InParanoid" id="Q6ZMW3"/>
<dbReference type="OMA" id="ACAKDDI"/>
<dbReference type="OrthoDB" id="47802at2759"/>
<dbReference type="PAN-GO" id="Q6ZMW3">
    <property type="GO annotations" value="1 GO annotation based on evolutionary models"/>
</dbReference>
<dbReference type="PhylomeDB" id="Q6ZMW3"/>
<dbReference type="TreeFam" id="TF317832"/>
<dbReference type="PathwayCommons" id="Q6ZMW3"/>
<dbReference type="SignaLink" id="Q6ZMW3"/>
<dbReference type="BioGRID-ORCS" id="400954">
    <property type="hits" value="13 hits in 1146 CRISPR screens"/>
</dbReference>
<dbReference type="ChiTaRS" id="EML6">
    <property type="organism name" value="human"/>
</dbReference>
<dbReference type="GenomeRNAi" id="400954"/>
<dbReference type="Pharos" id="Q6ZMW3">
    <property type="development level" value="Tdark"/>
</dbReference>
<dbReference type="PRO" id="PR:Q6ZMW3"/>
<dbReference type="Proteomes" id="UP000005640">
    <property type="component" value="Chromosome 2"/>
</dbReference>
<dbReference type="RNAct" id="Q6ZMW3">
    <property type="molecule type" value="protein"/>
</dbReference>
<dbReference type="Bgee" id="ENSG00000214595">
    <property type="expression patterns" value="Expressed in middle temporal gyrus and 162 other cell types or tissues"/>
</dbReference>
<dbReference type="ExpressionAtlas" id="Q6ZMW3">
    <property type="expression patterns" value="baseline and differential"/>
</dbReference>
<dbReference type="GO" id="GO:0005737">
    <property type="term" value="C:cytoplasm"/>
    <property type="evidence" value="ECO:0007669"/>
    <property type="project" value="UniProtKB-KW"/>
</dbReference>
<dbReference type="GO" id="GO:0005874">
    <property type="term" value="C:microtubule"/>
    <property type="evidence" value="ECO:0007669"/>
    <property type="project" value="UniProtKB-KW"/>
</dbReference>
<dbReference type="GO" id="GO:0008017">
    <property type="term" value="F:microtubule binding"/>
    <property type="evidence" value="ECO:0000318"/>
    <property type="project" value="GO_Central"/>
</dbReference>
<dbReference type="FunFam" id="2.130.10.10:FF:000040">
    <property type="entry name" value="echinoderm microtubule-associated protein-like 6 isoform X1"/>
    <property type="match status" value="1"/>
</dbReference>
<dbReference type="FunFam" id="2.130.10.10:FF:000042">
    <property type="entry name" value="echinoderm microtubule-associated protein-like 6 isoform X1"/>
    <property type="match status" value="1"/>
</dbReference>
<dbReference type="FunFam" id="2.130.10.10:FF:000044">
    <property type="entry name" value="echinoderm microtubule-associated protein-like 6 isoform X1"/>
    <property type="match status" value="1"/>
</dbReference>
<dbReference type="FunFam" id="2.130.10.10:FF:000024">
    <property type="entry name" value="Putative echinoderm microtubule-associated protein-like 6"/>
    <property type="match status" value="1"/>
</dbReference>
<dbReference type="FunFam" id="2.130.10.10:FF:000035">
    <property type="entry name" value="Putative echinoderm microtubule-associated protein-like 6"/>
    <property type="match status" value="1"/>
</dbReference>
<dbReference type="FunFam" id="2.130.10.10:FF:000037">
    <property type="entry name" value="Putative echinoderm microtubule-associated protein-like 6"/>
    <property type="match status" value="1"/>
</dbReference>
<dbReference type="Gene3D" id="2.130.10.10">
    <property type="entry name" value="YVTN repeat-like/Quinoprotein amine dehydrogenase"/>
    <property type="match status" value="6"/>
</dbReference>
<dbReference type="InterPro" id="IPR055442">
    <property type="entry name" value="Beta-prop_EML-like_2nd"/>
</dbReference>
<dbReference type="InterPro" id="IPR055439">
    <property type="entry name" value="Beta-prop_EML_1st"/>
</dbReference>
<dbReference type="InterPro" id="IPR011048">
    <property type="entry name" value="Haem_d1_sf"/>
</dbReference>
<dbReference type="InterPro" id="IPR005108">
    <property type="entry name" value="HELP"/>
</dbReference>
<dbReference type="InterPro" id="IPR011047">
    <property type="entry name" value="Quinoprotein_ADH-like_sf"/>
</dbReference>
<dbReference type="InterPro" id="IPR015943">
    <property type="entry name" value="WD40/YVTN_repeat-like_dom_sf"/>
</dbReference>
<dbReference type="InterPro" id="IPR036322">
    <property type="entry name" value="WD40_repeat_dom_sf"/>
</dbReference>
<dbReference type="InterPro" id="IPR001680">
    <property type="entry name" value="WD40_rpt"/>
</dbReference>
<dbReference type="InterPro" id="IPR050630">
    <property type="entry name" value="WD_repeat_EMAP"/>
</dbReference>
<dbReference type="PANTHER" id="PTHR13720:SF52">
    <property type="entry name" value="ECHINODERM MICROTUBULE-ASSOCIATED PROTEIN-LIKE 6"/>
    <property type="match status" value="1"/>
</dbReference>
<dbReference type="PANTHER" id="PTHR13720">
    <property type="entry name" value="WD-40 REPEAT PROTEIN"/>
    <property type="match status" value="1"/>
</dbReference>
<dbReference type="Pfam" id="PF23409">
    <property type="entry name" value="Beta-prop_EML"/>
    <property type="match status" value="3"/>
</dbReference>
<dbReference type="Pfam" id="PF23414">
    <property type="entry name" value="Beta-prop_EML_2"/>
    <property type="match status" value="3"/>
</dbReference>
<dbReference type="Pfam" id="PF03451">
    <property type="entry name" value="HELP"/>
    <property type="match status" value="3"/>
</dbReference>
<dbReference type="SMART" id="SM00320">
    <property type="entry name" value="WD40"/>
    <property type="match status" value="30"/>
</dbReference>
<dbReference type="SUPFAM" id="SSF51004">
    <property type="entry name" value="C-terminal (heme d1) domain of cytochrome cd1-nitrite reductase"/>
    <property type="match status" value="1"/>
</dbReference>
<dbReference type="SUPFAM" id="SSF50998">
    <property type="entry name" value="Quinoprotein alcohol dehydrogenase-like"/>
    <property type="match status" value="2"/>
</dbReference>
<dbReference type="SUPFAM" id="SSF50978">
    <property type="entry name" value="WD40 repeat-like"/>
    <property type="match status" value="2"/>
</dbReference>
<dbReference type="PROSITE" id="PS00678">
    <property type="entry name" value="WD_REPEATS_1"/>
    <property type="match status" value="1"/>
</dbReference>
<dbReference type="PROSITE" id="PS50082">
    <property type="entry name" value="WD_REPEATS_2"/>
    <property type="match status" value="6"/>
</dbReference>
<dbReference type="PROSITE" id="PS50294">
    <property type="entry name" value="WD_REPEATS_REGION"/>
    <property type="match status" value="5"/>
</dbReference>
<feature type="chain" id="PRO_0000325976" description="Echinoderm microtubule-associated protein-like 6">
    <location>
        <begin position="1"/>
        <end position="1958"/>
    </location>
</feature>
<feature type="repeat" description="WD 1">
    <location>
        <begin position="59"/>
        <end position="100"/>
    </location>
</feature>
<feature type="repeat" description="WD 2">
    <location>
        <begin position="104"/>
        <end position="145"/>
    </location>
</feature>
<feature type="repeat" description="WD 3">
    <location>
        <begin position="148"/>
        <end position="187"/>
    </location>
</feature>
<feature type="repeat" description="WD 4">
    <location>
        <begin position="195"/>
        <end position="233"/>
    </location>
</feature>
<feature type="repeat" description="WD 5">
    <location>
        <begin position="235"/>
        <end position="273"/>
    </location>
</feature>
<feature type="repeat" description="WD 6">
    <location>
        <begin position="280"/>
        <end position="321"/>
    </location>
</feature>
<feature type="repeat" description="WD 7">
    <location>
        <begin position="323"/>
        <end position="362"/>
    </location>
</feature>
<feature type="repeat" description="WD 8">
    <location>
        <begin position="364"/>
        <end position="403"/>
    </location>
</feature>
<feature type="repeat" description="WD 9">
    <location>
        <begin position="406"/>
        <end position="445"/>
    </location>
</feature>
<feature type="repeat" description="WD 10">
    <location>
        <begin position="561"/>
        <end position="601"/>
    </location>
</feature>
<feature type="repeat" description="WD 11">
    <location>
        <begin position="725"/>
        <end position="766"/>
    </location>
</feature>
<feature type="repeat" description="WD 12">
    <location>
        <begin position="770"/>
        <end position="811"/>
    </location>
</feature>
<feature type="repeat" description="WD 13">
    <location>
        <begin position="814"/>
        <end position="853"/>
    </location>
</feature>
<feature type="repeat" description="WD 14">
    <location>
        <begin position="861"/>
        <end position="900"/>
    </location>
</feature>
<feature type="repeat" description="WD 15">
    <location>
        <begin position="901"/>
        <end position="940"/>
    </location>
</feature>
<feature type="repeat" description="WD 16">
    <location>
        <begin position="996"/>
        <end position="1035"/>
    </location>
</feature>
<feature type="repeat" description="WD 17">
    <location>
        <begin position="1038"/>
        <end position="1077"/>
    </location>
</feature>
<feature type="repeat" description="WD 18">
    <location>
        <begin position="1080"/>
        <end position="1120"/>
    </location>
</feature>
<feature type="repeat" description="WD 19">
    <location>
        <begin position="1191"/>
        <end position="1230"/>
    </location>
</feature>
<feature type="repeat" description="WD 20">
    <location>
        <begin position="1236"/>
        <end position="1276"/>
    </location>
</feature>
<feature type="repeat" description="WD 21">
    <location>
        <begin position="1412"/>
        <end position="1456"/>
    </location>
</feature>
<feature type="repeat" description="WD 22">
    <location>
        <begin position="1460"/>
        <end position="1501"/>
    </location>
</feature>
<feature type="repeat" description="WD 23">
    <location>
        <begin position="1504"/>
        <end position="1543"/>
    </location>
</feature>
<feature type="repeat" description="WD 24">
    <location>
        <begin position="1553"/>
        <end position="1591"/>
    </location>
</feature>
<feature type="repeat" description="WD 25">
    <location>
        <begin position="1593"/>
        <end position="1638"/>
    </location>
</feature>
<feature type="repeat" description="WD 26">
    <location>
        <begin position="1685"/>
        <end position="1724"/>
    </location>
</feature>
<feature type="repeat" description="WD 27">
    <location>
        <begin position="1726"/>
        <end position="1767"/>
    </location>
</feature>
<feature type="repeat" description="WD 28">
    <location>
        <begin position="1768"/>
        <end position="1807"/>
    </location>
</feature>
<feature type="repeat" description="WD 29">
    <location>
        <begin position="1880"/>
        <end position="1919"/>
    </location>
</feature>
<feature type="repeat" description="WD 30">
    <location>
        <begin position="1925"/>
        <end position="1958"/>
    </location>
</feature>
<feature type="region of interest" description="Disordered" evidence="2">
    <location>
        <begin position="603"/>
        <end position="626"/>
    </location>
</feature>
<feature type="region of interest" description="Disordered" evidence="2">
    <location>
        <begin position="1322"/>
        <end position="1353"/>
    </location>
</feature>
<feature type="compositionally biased region" description="Acidic residues" evidence="2">
    <location>
        <begin position="615"/>
        <end position="626"/>
    </location>
</feature>
<feature type="compositionally biased region" description="Basic and acidic residues" evidence="2">
    <location>
        <begin position="1322"/>
        <end position="1337"/>
    </location>
</feature>
<feature type="splice variant" id="VSP_034221" description="In isoform 2." evidence="3">
    <original>VSTGAYKRQVHEVPLGKQVTEAVVIEKITWASWTSVLGDEVIGIWPRNADKADVNCACVTHAGLNIVTGDDFGLVKLFDFPCTEKFAKHKRYFGHSAHVTNIRFSYDDKYVVSTGGDDCSVFVWRCL</original>
    <variation>MQLTLLVGNHTQRTAILGLWKIARKWMRRKMGKWPAVVVMGWP</variation>
    <location>
        <begin position="1832"/>
        <end position="1958"/>
    </location>
</feature>
<feature type="sequence conflict" description="In Ref. 2; BAD18612." evidence="4" ref="2">
    <original>K</original>
    <variation>Y</variation>
    <location>
        <position position="1828"/>
    </location>
</feature>
<comment type="function">
    <text evidence="1">May modify the assembly dynamics of microtubules, such that microtubules are slightly longer, but more dynamic.</text>
</comment>
<comment type="subcellular location">
    <subcellularLocation>
        <location evidence="4">Cytoplasm</location>
        <location evidence="4">Cytoskeleton</location>
    </subcellularLocation>
</comment>
<comment type="alternative products">
    <event type="alternative splicing"/>
    <isoform>
        <id>Q6ZMW3-1</id>
        <name>1</name>
        <sequence type="displayed"/>
    </isoform>
    <isoform>
        <id>Q6ZMW3-2</id>
        <name>2</name>
        <sequence type="described" ref="VSP_034221"/>
    </isoform>
</comment>
<comment type="similarity">
    <text evidence="4">Belongs to the WD repeat EMAP family.</text>
</comment>
<sequence>MADRTAPRCQLRLEWVYGYRGHQCRNNLYYTAGKEVVYFVAGVGVVYNTREHSQKFFLGHNDDIISLALHPDKTLVATGQVGKEPYICIWDSYNVQTVSLLKDVHTHGVACLAFDSDGQRLASVGLDAKNTVCIWDWRKGKLLASATGHSDRIFDISWDPYQPNRVVSCGVKHIKFWTLCGNALTAKRGIFGKTGDLQTILCLACAKEDITYSGALNGDIYVWKGLNLVRTIQGAHSAGIFSMYACEEGFATGGRDGCIRLWDTDFKPITKIDLRETEQGYKGLSIRSVCWKADRLLAGTQDSEIFEVIVRERDKPMLILQGHCEGELWALALHPKKPLAVTGSDDRSVRLWSLADHALIARCNMEEAVRSVAFSPDGSQLALGMKDGSFIVLRVRDMTEVVHIKDRKEVIHEMKFSPDGSYLAVGSNDGPVDVYAVAQRYKKIGECSKSLSFITHIDWSLDSKYLQTNDGAGERLFYRMPSGKPLTSKEEIKGIPWASWTCVKGPEVSGIWPKYTEVTDINSVDANYNSSVLVSGDDFGLVKLFKFPCLKRGAKFRKYVGHSAHVTNVRWSHDFQWVLSTGGADHSVFQWRFIPEGVSNGMLETAPQEGGADSYSEESDSDLSDVPELDSDIEQEAQINYDRQVYKEDLPQLKQQSKEKNHAVPFLKREKAPEDSLKLQFIHGYRGYDCRNNLFYTQAGEVVYHIAAVAVVYNRQQHSQRLYLGHDDDILSLTIHPVKDYVATGQVGRDAAIHVWDTQTLKCLSLLKGQHQRGVCALDFSADGKCLVSVGLDDFHSIVFWDWKKGEKIATTRGHKDKIFVVKCNPHHVDKLVTVGIKHIKFWQQAGGGFTSKRGTFGSVGKLETMMCVSYGRMEDLVFSGAATGDIFIWKDILLLKTVKAHDGPVFAMYALDKGFVTGGKDGIVELWDDMFERCLKTYAIKRSALSTSSKGLLLEDNPSIRAITLGHGHILVGTKNGEILEIDKSGPMTLLVQGHMEGEVWGLAAHPLLPICATVSDDKTLRIWELSAQHRMLAVRKLKKGGRCCAFSPDGKALAVGLNDGSFLVVNADTVEDMVSFHHRKEMISDIKFSKDTGKYLAVASHDNFVDIYNVLTSKRVGICKGASSYITHIDWDSRGKLLQVNSGAREQLFFEAPRGKRHIIRPSEIEKIEWDTWTCVLGPTCEGIWPAHSDITDVNAASLTKDCSLLATGDDFGFVKLFSYPVKGQHARFKKYVGHSAHVTNVRWLHNDSVLLTVGGADTALMIWTREFVGTQESKLVDSEESDTDVEEDGGYDSDVAREKAIDYTTKIYAVSIREMEGTKPHQQLKEVSVEERPPVSRAAPQPEKLQKNNITKKKKLVEELALDHVFGYRGFDCRNNLHYLNDGADIIFHTAAAGIVQNLSTGSQSFYLEHTDDILCLTVNQHPKYRNVVATSQIGTTPSIHIWDAMTKHTLSMLRCFHSKGVNYINFSATGKLLVSVGVDPEHTITVWRWQEGAKVASRGGHLERIFVVEFRPDSDTQFVSVGVKHMKFWTLAGSALLYKKGVIGSLGAAKMQTMLSVAFGANNLTFTGAINGDVYVWKDHFLIRLVAKAHTGPVFTMYTTLRDGLIVTGGKERPTKEGGAVKLWDQEMKRCRAFQLETGQLVECVRSVCRGKGKILVGTKDGEIIEVGEKNAASNILIDGHMEGEIWGLATHPSKDLFISASNDGTARIWDLADKKLLNKVSLGHAARCAAYSPDGEMVAIGMKNGEFVILLVNSLKVWGKKRDRKSAIQDIRISPDNRFLAVGSSEHTVDFYDLTQGTNLNRIGYCKDIPSFVIQMDFSADGKYIQVSTGAYKRQVHEVPLGKQVTEAVVIEKITWASWTSVLGDEVIGIWPRNADKADVNCACVTHAGLNIVTGDDFGLVKLFDFPCTEKFAKHKRYFGHSAHVTNIRFSYDDKYVVSTGGDDCSVFVWRCL</sequence>
<gene>
    <name type="primary">EML6</name>
    <name type="synonym">EML5L</name>
</gene>
<organism>
    <name type="scientific">Homo sapiens</name>
    <name type="common">Human</name>
    <dbReference type="NCBI Taxonomy" id="9606"/>
    <lineage>
        <taxon>Eukaryota</taxon>
        <taxon>Metazoa</taxon>
        <taxon>Chordata</taxon>
        <taxon>Craniata</taxon>
        <taxon>Vertebrata</taxon>
        <taxon>Euteleostomi</taxon>
        <taxon>Mammalia</taxon>
        <taxon>Eutheria</taxon>
        <taxon>Euarchontoglires</taxon>
        <taxon>Primates</taxon>
        <taxon>Haplorrhini</taxon>
        <taxon>Catarrhini</taxon>
        <taxon>Hominidae</taxon>
        <taxon>Homo</taxon>
    </lineage>
</organism>
<protein>
    <recommendedName>
        <fullName>Echinoderm microtubule-associated protein-like 6</fullName>
        <shortName>EMAP-6</shortName>
    </recommendedName>
    <alternativeName>
        <fullName>Echinoderm microtubule-associated protein-like 5-like</fullName>
    </alternativeName>
</protein>
<evidence type="ECO:0000250" key="1"/>
<evidence type="ECO:0000256" key="2">
    <source>
        <dbReference type="SAM" id="MobiDB-lite"/>
    </source>
</evidence>
<evidence type="ECO:0000303" key="3">
    <source>
    </source>
</evidence>
<evidence type="ECO:0000305" key="4"/>